<gene>
    <name evidence="1" type="primary">ispG</name>
    <name type="ordered locus">NMB1310</name>
</gene>
<feature type="chain" id="PRO_0000190605" description="4-hydroxy-3-methylbut-2-en-1-yl diphosphate synthase (flavodoxin)">
    <location>
        <begin position="1"/>
        <end position="421"/>
    </location>
</feature>
<feature type="binding site" evidence="1">
    <location>
        <position position="298"/>
    </location>
    <ligand>
        <name>[4Fe-4S] cluster</name>
        <dbReference type="ChEBI" id="CHEBI:49883"/>
    </ligand>
</feature>
<feature type="binding site" evidence="1">
    <location>
        <position position="301"/>
    </location>
    <ligand>
        <name>[4Fe-4S] cluster</name>
        <dbReference type="ChEBI" id="CHEBI:49883"/>
    </ligand>
</feature>
<feature type="binding site" evidence="1">
    <location>
        <position position="344"/>
    </location>
    <ligand>
        <name>[4Fe-4S] cluster</name>
        <dbReference type="ChEBI" id="CHEBI:49883"/>
    </ligand>
</feature>
<feature type="binding site" evidence="1">
    <location>
        <position position="351"/>
    </location>
    <ligand>
        <name>[4Fe-4S] cluster</name>
        <dbReference type="ChEBI" id="CHEBI:49883"/>
    </ligand>
</feature>
<comment type="function">
    <text evidence="1">Converts 2C-methyl-D-erythritol 2,4-cyclodiphosphate (ME-2,4cPP) into 1-hydroxy-2-methyl-2-(E)-butenyl 4-diphosphate.</text>
</comment>
<comment type="catalytic activity">
    <reaction evidence="1">
        <text>(2E)-4-hydroxy-3-methylbut-2-enyl diphosphate + oxidized [flavodoxin] + H2O + 2 H(+) = 2-C-methyl-D-erythritol 2,4-cyclic diphosphate + reduced [flavodoxin]</text>
        <dbReference type="Rhea" id="RHEA:43604"/>
        <dbReference type="Rhea" id="RHEA-COMP:10622"/>
        <dbReference type="Rhea" id="RHEA-COMP:10623"/>
        <dbReference type="ChEBI" id="CHEBI:15377"/>
        <dbReference type="ChEBI" id="CHEBI:15378"/>
        <dbReference type="ChEBI" id="CHEBI:57618"/>
        <dbReference type="ChEBI" id="CHEBI:58210"/>
        <dbReference type="ChEBI" id="CHEBI:58483"/>
        <dbReference type="ChEBI" id="CHEBI:128753"/>
        <dbReference type="EC" id="1.17.7.3"/>
    </reaction>
</comment>
<comment type="cofactor">
    <cofactor evidence="1">
        <name>[4Fe-4S] cluster</name>
        <dbReference type="ChEBI" id="CHEBI:49883"/>
    </cofactor>
    <text evidence="1">Binds 1 [4Fe-4S] cluster.</text>
</comment>
<comment type="pathway">
    <text evidence="1">Isoprenoid biosynthesis; isopentenyl diphosphate biosynthesis via DXP pathway; isopentenyl diphosphate from 1-deoxy-D-xylulose 5-phosphate: step 5/6.</text>
</comment>
<comment type="similarity">
    <text evidence="1">Belongs to the IspG family.</text>
</comment>
<evidence type="ECO:0000255" key="1">
    <source>
        <dbReference type="HAMAP-Rule" id="MF_00159"/>
    </source>
</evidence>
<proteinExistence type="inferred from homology"/>
<accession>Q9JZ40</accession>
<reference key="1">
    <citation type="journal article" date="2000" name="Science">
        <title>Complete genome sequence of Neisseria meningitidis serogroup B strain MC58.</title>
        <authorList>
            <person name="Tettelin H."/>
            <person name="Saunders N.J."/>
            <person name="Heidelberg J.F."/>
            <person name="Jeffries A.C."/>
            <person name="Nelson K.E."/>
            <person name="Eisen J.A."/>
            <person name="Ketchum K.A."/>
            <person name="Hood D.W."/>
            <person name="Peden J.F."/>
            <person name="Dodson R.J."/>
            <person name="Nelson W.C."/>
            <person name="Gwinn M.L."/>
            <person name="DeBoy R.T."/>
            <person name="Peterson J.D."/>
            <person name="Hickey E.K."/>
            <person name="Haft D.H."/>
            <person name="Salzberg S.L."/>
            <person name="White O."/>
            <person name="Fleischmann R.D."/>
            <person name="Dougherty B.A."/>
            <person name="Mason T.M."/>
            <person name="Ciecko A."/>
            <person name="Parksey D.S."/>
            <person name="Blair E."/>
            <person name="Cittone H."/>
            <person name="Clark E.B."/>
            <person name="Cotton M.D."/>
            <person name="Utterback T.R."/>
            <person name="Khouri H.M."/>
            <person name="Qin H."/>
            <person name="Vamathevan J.J."/>
            <person name="Gill J."/>
            <person name="Scarlato V."/>
            <person name="Masignani V."/>
            <person name="Pizza M."/>
            <person name="Grandi G."/>
            <person name="Sun L."/>
            <person name="Smith H.O."/>
            <person name="Fraser C.M."/>
            <person name="Moxon E.R."/>
            <person name="Rappuoli R."/>
            <person name="Venter J.C."/>
        </authorList>
    </citation>
    <scope>NUCLEOTIDE SEQUENCE [LARGE SCALE GENOMIC DNA]</scope>
    <source>
        <strain>ATCC BAA-335 / MC58</strain>
    </source>
</reference>
<organism>
    <name type="scientific">Neisseria meningitidis serogroup B (strain ATCC BAA-335 / MC58)</name>
    <dbReference type="NCBI Taxonomy" id="122586"/>
    <lineage>
        <taxon>Bacteria</taxon>
        <taxon>Pseudomonadati</taxon>
        <taxon>Pseudomonadota</taxon>
        <taxon>Betaproteobacteria</taxon>
        <taxon>Neisseriales</taxon>
        <taxon>Neisseriaceae</taxon>
        <taxon>Neisseria</taxon>
    </lineage>
</organism>
<dbReference type="EC" id="1.17.7.3" evidence="1"/>
<dbReference type="EMBL" id="AE002098">
    <property type="protein sequence ID" value="AAF41685.1"/>
    <property type="molecule type" value="Genomic_DNA"/>
</dbReference>
<dbReference type="PIR" id="D81098">
    <property type="entry name" value="D81098"/>
</dbReference>
<dbReference type="RefSeq" id="NP_274329.1">
    <property type="nucleotide sequence ID" value="NC_003112.2"/>
</dbReference>
<dbReference type="RefSeq" id="WP_002227267.1">
    <property type="nucleotide sequence ID" value="NC_003112.2"/>
</dbReference>
<dbReference type="SMR" id="Q9JZ40"/>
<dbReference type="FunCoup" id="Q9JZ40">
    <property type="interactions" value="317"/>
</dbReference>
<dbReference type="STRING" id="122586.NMB1310"/>
<dbReference type="PaxDb" id="122586-NMB1310"/>
<dbReference type="KEGG" id="nme:NMB1310"/>
<dbReference type="PATRIC" id="fig|122586.8.peg.1644"/>
<dbReference type="HOGENOM" id="CLU_042258_1_0_4"/>
<dbReference type="InParanoid" id="Q9JZ40"/>
<dbReference type="OrthoDB" id="9803214at2"/>
<dbReference type="UniPathway" id="UPA00056">
    <property type="reaction ID" value="UER00096"/>
</dbReference>
<dbReference type="Proteomes" id="UP000000425">
    <property type="component" value="Chromosome"/>
</dbReference>
<dbReference type="GO" id="GO:0051539">
    <property type="term" value="F:4 iron, 4 sulfur cluster binding"/>
    <property type="evidence" value="ECO:0007669"/>
    <property type="project" value="UniProtKB-UniRule"/>
</dbReference>
<dbReference type="GO" id="GO:0046429">
    <property type="term" value="F:4-hydroxy-3-methylbut-2-en-1-yl diphosphate synthase activity (ferredoxin)"/>
    <property type="evidence" value="ECO:0000318"/>
    <property type="project" value="GO_Central"/>
</dbReference>
<dbReference type="GO" id="GO:0141197">
    <property type="term" value="F:4-hydroxy-3-methylbut-2-enyl-diphosphate synthase activity (flavodoxin)"/>
    <property type="evidence" value="ECO:0007669"/>
    <property type="project" value="UniProtKB-EC"/>
</dbReference>
<dbReference type="GO" id="GO:0005506">
    <property type="term" value="F:iron ion binding"/>
    <property type="evidence" value="ECO:0007669"/>
    <property type="project" value="InterPro"/>
</dbReference>
<dbReference type="GO" id="GO:0019288">
    <property type="term" value="P:isopentenyl diphosphate biosynthetic process, methylerythritol 4-phosphate pathway"/>
    <property type="evidence" value="ECO:0000318"/>
    <property type="project" value="GO_Central"/>
</dbReference>
<dbReference type="GO" id="GO:0016114">
    <property type="term" value="P:terpenoid biosynthetic process"/>
    <property type="evidence" value="ECO:0007669"/>
    <property type="project" value="InterPro"/>
</dbReference>
<dbReference type="FunFam" id="3.20.20.20:FF:000001">
    <property type="entry name" value="4-hydroxy-3-methylbut-2-en-1-yl diphosphate synthase (flavodoxin)"/>
    <property type="match status" value="1"/>
</dbReference>
<dbReference type="FunFam" id="3.30.413.10:FF:000012">
    <property type="entry name" value="4-hydroxy-3-methylbut-2-en-1-yl diphosphate synthase (flavodoxin)"/>
    <property type="match status" value="1"/>
</dbReference>
<dbReference type="Gene3D" id="3.20.20.20">
    <property type="entry name" value="Dihydropteroate synthase-like"/>
    <property type="match status" value="1"/>
</dbReference>
<dbReference type="Gene3D" id="3.30.413.10">
    <property type="entry name" value="Sulfite Reductase Hemoprotein, domain 1"/>
    <property type="match status" value="1"/>
</dbReference>
<dbReference type="HAMAP" id="MF_00159">
    <property type="entry name" value="IspG"/>
    <property type="match status" value="1"/>
</dbReference>
<dbReference type="InterPro" id="IPR011005">
    <property type="entry name" value="Dihydropteroate_synth-like_sf"/>
</dbReference>
<dbReference type="InterPro" id="IPR016425">
    <property type="entry name" value="IspG_bac"/>
</dbReference>
<dbReference type="InterPro" id="IPR004588">
    <property type="entry name" value="IspG_bac-typ"/>
</dbReference>
<dbReference type="InterPro" id="IPR045854">
    <property type="entry name" value="NO2/SO3_Rdtase_4Fe4S_sf"/>
</dbReference>
<dbReference type="NCBIfam" id="TIGR00612">
    <property type="entry name" value="ispG_gcpE"/>
    <property type="match status" value="1"/>
</dbReference>
<dbReference type="NCBIfam" id="NF001540">
    <property type="entry name" value="PRK00366.1"/>
    <property type="match status" value="1"/>
</dbReference>
<dbReference type="PANTHER" id="PTHR30454">
    <property type="entry name" value="4-HYDROXY-3-METHYLBUT-2-EN-1-YL DIPHOSPHATE SYNTHASE"/>
    <property type="match status" value="1"/>
</dbReference>
<dbReference type="PANTHER" id="PTHR30454:SF0">
    <property type="entry name" value="4-HYDROXY-3-METHYLBUT-2-EN-1-YL DIPHOSPHATE SYNTHASE (FERREDOXIN), CHLOROPLASTIC"/>
    <property type="match status" value="1"/>
</dbReference>
<dbReference type="Pfam" id="PF04551">
    <property type="entry name" value="GcpE"/>
    <property type="match status" value="1"/>
</dbReference>
<dbReference type="PIRSF" id="PIRSF004640">
    <property type="entry name" value="IspG"/>
    <property type="match status" value="1"/>
</dbReference>
<dbReference type="SUPFAM" id="SSF56014">
    <property type="entry name" value="Nitrite and sulphite reductase 4Fe-4S domain-like"/>
    <property type="match status" value="1"/>
</dbReference>
<name>ISPG_NEIMB</name>
<protein>
    <recommendedName>
        <fullName evidence="1">4-hydroxy-3-methylbut-2-en-1-yl diphosphate synthase (flavodoxin)</fullName>
        <ecNumber evidence="1">1.17.7.3</ecNumber>
    </recommendedName>
    <alternativeName>
        <fullName evidence="1">1-hydroxy-2-methyl-2-(E)-butenyl 4-diphosphate synthase</fullName>
    </alternativeName>
</protein>
<keyword id="KW-0004">4Fe-4S</keyword>
<keyword id="KW-0408">Iron</keyword>
<keyword id="KW-0411">Iron-sulfur</keyword>
<keyword id="KW-0414">Isoprene biosynthesis</keyword>
<keyword id="KW-0479">Metal-binding</keyword>
<keyword id="KW-0560">Oxidoreductase</keyword>
<keyword id="KW-1185">Reference proteome</keyword>
<sequence length="421" mass="45360">MNTLQRRKTHQVRIDHITVGSEAPVVIQSMTNTDTADAKATALQIKELSDAGSEMVRITVNSPEAASKVAEIRRRLDDMGYATPLIGDFHFNGERLLAEFPECGKALSKYRINPGNVGKGVKGDEKFAFMIRTAAENDKAVRIGVNWGSLDQSLAKRMMDANLASSAPKPPEEVTKEALIVSALESAEKAVLLGLPEDKIILSCKVSAVQDLIQVYRELGSRCAYPLHLGLTEAGMGSKGIVASTAALSVLLQEGIGDTIRISLTPEPGSPRTQEVVVGQEILQTMGLRSFTPMVTACPGCGRTTSTVFQELAQDVQNYLRQKMSIWRTLYPGVESLNVAVMGCVVNGPGESKLADIGISLPGTGETPVAPVYVDGERKVTLKGDNIATEFLAIVEEYVKTNYGENGLKRHQGKVIPIHSL</sequence>